<name>SECB_LEGPL</name>
<comment type="function">
    <text evidence="1">One of the proteins required for the normal export of preproteins out of the cell cytoplasm. It is a molecular chaperone that binds to a subset of precursor proteins, maintaining them in a translocation-competent state. It also specifically binds to its receptor SecA.</text>
</comment>
<comment type="subunit">
    <text evidence="1">Homotetramer, a dimer of dimers. One homotetramer interacts with 1 SecA dimer.</text>
</comment>
<comment type="subcellular location">
    <subcellularLocation>
        <location evidence="1">Cytoplasm</location>
    </subcellularLocation>
</comment>
<comment type="similarity">
    <text evidence="1">Belongs to the SecB family.</text>
</comment>
<reference key="1">
    <citation type="journal article" date="2004" name="Nat. Genet.">
        <title>Evidence in the Legionella pneumophila genome for exploitation of host cell functions and high genome plasticity.</title>
        <authorList>
            <person name="Cazalet C."/>
            <person name="Rusniok C."/>
            <person name="Brueggemann H."/>
            <person name="Zidane N."/>
            <person name="Magnier A."/>
            <person name="Ma L."/>
            <person name="Tichit M."/>
            <person name="Jarraud S."/>
            <person name="Bouchier C."/>
            <person name="Vandenesch F."/>
            <person name="Kunst F."/>
            <person name="Etienne J."/>
            <person name="Glaser P."/>
            <person name="Buchrieser C."/>
        </authorList>
    </citation>
    <scope>NUCLEOTIDE SEQUENCE [LARGE SCALE GENOMIC DNA]</scope>
    <source>
        <strain>Lens</strain>
    </source>
</reference>
<evidence type="ECO:0000255" key="1">
    <source>
        <dbReference type="HAMAP-Rule" id="MF_00821"/>
    </source>
</evidence>
<protein>
    <recommendedName>
        <fullName evidence="1">Protein-export protein SecB</fullName>
    </recommendedName>
</protein>
<accession>Q5WUE1</accession>
<keyword id="KW-0143">Chaperone</keyword>
<keyword id="KW-0963">Cytoplasm</keyword>
<keyword id="KW-0653">Protein transport</keyword>
<keyword id="KW-0811">Translocation</keyword>
<keyword id="KW-0813">Transport</keyword>
<sequence length="162" mass="18357">MTEQLNTNQQNDEAQFMIQRIYIKDLSYETPNTPAVFQQQWEPELKLDLNTTTTQLDKNVYEVVLTVTTTVMNQKTTAFLVEVKQAGIFTIQGAAASQLDHLLHSFCPSILFPYAREAITSQVIRGSFPQLVLAPINFDALYMQQLEEKQKATGAKDETVSH</sequence>
<feature type="chain" id="PRO_0000055381" description="Protein-export protein SecB">
    <location>
        <begin position="1"/>
        <end position="162"/>
    </location>
</feature>
<gene>
    <name evidence="1" type="primary">secB</name>
    <name type="ordered locus">lpl2227</name>
</gene>
<organism>
    <name type="scientific">Legionella pneumophila (strain Lens)</name>
    <dbReference type="NCBI Taxonomy" id="297245"/>
    <lineage>
        <taxon>Bacteria</taxon>
        <taxon>Pseudomonadati</taxon>
        <taxon>Pseudomonadota</taxon>
        <taxon>Gammaproteobacteria</taxon>
        <taxon>Legionellales</taxon>
        <taxon>Legionellaceae</taxon>
        <taxon>Legionella</taxon>
    </lineage>
</organism>
<dbReference type="EMBL" id="CR628337">
    <property type="protein sequence ID" value="CAH16467.1"/>
    <property type="molecule type" value="Genomic_DNA"/>
</dbReference>
<dbReference type="RefSeq" id="WP_011216200.1">
    <property type="nucleotide sequence ID" value="NC_006369.1"/>
</dbReference>
<dbReference type="SMR" id="Q5WUE1"/>
<dbReference type="KEGG" id="lpf:lpl2227"/>
<dbReference type="LegioList" id="lpl2227"/>
<dbReference type="HOGENOM" id="CLU_111574_1_0_6"/>
<dbReference type="Proteomes" id="UP000002517">
    <property type="component" value="Chromosome"/>
</dbReference>
<dbReference type="GO" id="GO:0005737">
    <property type="term" value="C:cytoplasm"/>
    <property type="evidence" value="ECO:0007669"/>
    <property type="project" value="UniProtKB-SubCell"/>
</dbReference>
<dbReference type="GO" id="GO:0051082">
    <property type="term" value="F:unfolded protein binding"/>
    <property type="evidence" value="ECO:0007669"/>
    <property type="project" value="InterPro"/>
</dbReference>
<dbReference type="GO" id="GO:0006457">
    <property type="term" value="P:protein folding"/>
    <property type="evidence" value="ECO:0007669"/>
    <property type="project" value="UniProtKB-UniRule"/>
</dbReference>
<dbReference type="GO" id="GO:0051262">
    <property type="term" value="P:protein tetramerization"/>
    <property type="evidence" value="ECO:0007669"/>
    <property type="project" value="InterPro"/>
</dbReference>
<dbReference type="GO" id="GO:0015031">
    <property type="term" value="P:protein transport"/>
    <property type="evidence" value="ECO:0007669"/>
    <property type="project" value="UniProtKB-UniRule"/>
</dbReference>
<dbReference type="Gene3D" id="3.10.420.10">
    <property type="entry name" value="SecB-like"/>
    <property type="match status" value="1"/>
</dbReference>
<dbReference type="HAMAP" id="MF_00821">
    <property type="entry name" value="SecB"/>
    <property type="match status" value="1"/>
</dbReference>
<dbReference type="InterPro" id="IPR003708">
    <property type="entry name" value="SecB"/>
</dbReference>
<dbReference type="InterPro" id="IPR035958">
    <property type="entry name" value="SecB-like_sf"/>
</dbReference>
<dbReference type="NCBIfam" id="NF004393">
    <property type="entry name" value="PRK05751.1-4"/>
    <property type="match status" value="1"/>
</dbReference>
<dbReference type="NCBIfam" id="TIGR00809">
    <property type="entry name" value="secB"/>
    <property type="match status" value="1"/>
</dbReference>
<dbReference type="PANTHER" id="PTHR36918">
    <property type="match status" value="1"/>
</dbReference>
<dbReference type="PANTHER" id="PTHR36918:SF1">
    <property type="entry name" value="PROTEIN-EXPORT PROTEIN SECB"/>
    <property type="match status" value="1"/>
</dbReference>
<dbReference type="Pfam" id="PF02556">
    <property type="entry name" value="SecB"/>
    <property type="match status" value="1"/>
</dbReference>
<dbReference type="PRINTS" id="PR01594">
    <property type="entry name" value="SECBCHAPRONE"/>
</dbReference>
<dbReference type="SUPFAM" id="SSF54611">
    <property type="entry name" value="SecB-like"/>
    <property type="match status" value="1"/>
</dbReference>
<proteinExistence type="inferred from homology"/>